<keyword id="KW-0963">Cytoplasm</keyword>
<keyword id="KW-0255">Endonuclease</keyword>
<keyword id="KW-0378">Hydrolase</keyword>
<keyword id="KW-0460">Magnesium</keyword>
<keyword id="KW-0479">Metal-binding</keyword>
<keyword id="KW-0507">mRNA processing</keyword>
<keyword id="KW-0540">Nuclease</keyword>
<keyword id="KW-1185">Reference proteome</keyword>
<keyword id="KW-0694">RNA-binding</keyword>
<keyword id="KW-0698">rRNA processing</keyword>
<keyword id="KW-0699">rRNA-binding</keyword>
<keyword id="KW-0819">tRNA processing</keyword>
<reference key="1">
    <citation type="submission" date="2006-02" db="EMBL/GenBank/DDBJ databases">
        <title>Complete sequence of chromosome of Jannaschia sp. CCS1.</title>
        <authorList>
            <consortium name="US DOE Joint Genome Institute"/>
            <person name="Copeland A."/>
            <person name="Lucas S."/>
            <person name="Lapidus A."/>
            <person name="Barry K."/>
            <person name="Detter J.C."/>
            <person name="Glavina del Rio T."/>
            <person name="Hammon N."/>
            <person name="Israni S."/>
            <person name="Pitluck S."/>
            <person name="Brettin T."/>
            <person name="Bruce D."/>
            <person name="Han C."/>
            <person name="Tapia R."/>
            <person name="Gilna P."/>
            <person name="Chertkov O."/>
            <person name="Saunders E."/>
            <person name="Schmutz J."/>
            <person name="Larimer F."/>
            <person name="Land M."/>
            <person name="Kyrpides N."/>
            <person name="Lykidis A."/>
            <person name="Moran M.A."/>
            <person name="Belas R."/>
            <person name="Ye W."/>
            <person name="Buchan A."/>
            <person name="Gonzalez J.M."/>
            <person name="Schell M.A."/>
            <person name="Richardson P."/>
        </authorList>
    </citation>
    <scope>NUCLEOTIDE SEQUENCE [LARGE SCALE GENOMIC DNA]</scope>
    <source>
        <strain>CCS1</strain>
    </source>
</reference>
<sequence>MKPARELTAFMDRLGYVFEDPALLARALTHSSLSSPTRGDNQRLEFLGDRVLGLVMAEAVLAADTDAKEGTLAPRFNALVRKEACADVARQIDLGAAMRLGKSEMSAGGRRRMALLGDAMEAVIAAVYLDGGFASARDLVLRLWSERVQSVEEDARDAKTALQEWAQARGMAPPTYTEVARSGPDHAPVFRVRVTLSSGENAEAQAKAKRQAEQQAAKDLLAQLAGE</sequence>
<proteinExistence type="inferred from homology"/>
<evidence type="ECO:0000255" key="1">
    <source>
        <dbReference type="HAMAP-Rule" id="MF_00104"/>
    </source>
</evidence>
<dbReference type="EC" id="3.1.26.3" evidence="1"/>
<dbReference type="EMBL" id="CP000264">
    <property type="protein sequence ID" value="ABD53439.1"/>
    <property type="molecule type" value="Genomic_DNA"/>
</dbReference>
<dbReference type="RefSeq" id="WP_011453648.1">
    <property type="nucleotide sequence ID" value="NC_007802.1"/>
</dbReference>
<dbReference type="SMR" id="Q28V23"/>
<dbReference type="STRING" id="290400.Jann_0522"/>
<dbReference type="KEGG" id="jan:Jann_0522"/>
<dbReference type="eggNOG" id="COG0571">
    <property type="taxonomic scope" value="Bacteria"/>
</dbReference>
<dbReference type="HOGENOM" id="CLU_000907_1_1_5"/>
<dbReference type="OrthoDB" id="9805026at2"/>
<dbReference type="Proteomes" id="UP000008326">
    <property type="component" value="Chromosome"/>
</dbReference>
<dbReference type="GO" id="GO:0005737">
    <property type="term" value="C:cytoplasm"/>
    <property type="evidence" value="ECO:0007669"/>
    <property type="project" value="UniProtKB-SubCell"/>
</dbReference>
<dbReference type="GO" id="GO:0003725">
    <property type="term" value="F:double-stranded RNA binding"/>
    <property type="evidence" value="ECO:0007669"/>
    <property type="project" value="TreeGrafter"/>
</dbReference>
<dbReference type="GO" id="GO:0046872">
    <property type="term" value="F:metal ion binding"/>
    <property type="evidence" value="ECO:0007669"/>
    <property type="project" value="UniProtKB-KW"/>
</dbReference>
<dbReference type="GO" id="GO:0004525">
    <property type="term" value="F:ribonuclease III activity"/>
    <property type="evidence" value="ECO:0007669"/>
    <property type="project" value="UniProtKB-UniRule"/>
</dbReference>
<dbReference type="GO" id="GO:0019843">
    <property type="term" value="F:rRNA binding"/>
    <property type="evidence" value="ECO:0007669"/>
    <property type="project" value="UniProtKB-KW"/>
</dbReference>
<dbReference type="GO" id="GO:0006397">
    <property type="term" value="P:mRNA processing"/>
    <property type="evidence" value="ECO:0007669"/>
    <property type="project" value="UniProtKB-UniRule"/>
</dbReference>
<dbReference type="GO" id="GO:0010468">
    <property type="term" value="P:regulation of gene expression"/>
    <property type="evidence" value="ECO:0007669"/>
    <property type="project" value="TreeGrafter"/>
</dbReference>
<dbReference type="GO" id="GO:0006364">
    <property type="term" value="P:rRNA processing"/>
    <property type="evidence" value="ECO:0007669"/>
    <property type="project" value="UniProtKB-UniRule"/>
</dbReference>
<dbReference type="GO" id="GO:0008033">
    <property type="term" value="P:tRNA processing"/>
    <property type="evidence" value="ECO:0007669"/>
    <property type="project" value="UniProtKB-KW"/>
</dbReference>
<dbReference type="CDD" id="cd10845">
    <property type="entry name" value="DSRM_RNAse_III_family"/>
    <property type="match status" value="1"/>
</dbReference>
<dbReference type="CDD" id="cd00593">
    <property type="entry name" value="RIBOc"/>
    <property type="match status" value="1"/>
</dbReference>
<dbReference type="FunFam" id="1.10.1520.10:FF:000001">
    <property type="entry name" value="Ribonuclease 3"/>
    <property type="match status" value="1"/>
</dbReference>
<dbReference type="Gene3D" id="3.30.160.20">
    <property type="match status" value="1"/>
</dbReference>
<dbReference type="Gene3D" id="1.10.1520.10">
    <property type="entry name" value="Ribonuclease III domain"/>
    <property type="match status" value="1"/>
</dbReference>
<dbReference type="HAMAP" id="MF_00104">
    <property type="entry name" value="RNase_III"/>
    <property type="match status" value="1"/>
</dbReference>
<dbReference type="InterPro" id="IPR014720">
    <property type="entry name" value="dsRBD_dom"/>
</dbReference>
<dbReference type="InterPro" id="IPR011907">
    <property type="entry name" value="RNase_III"/>
</dbReference>
<dbReference type="InterPro" id="IPR000999">
    <property type="entry name" value="RNase_III_dom"/>
</dbReference>
<dbReference type="InterPro" id="IPR036389">
    <property type="entry name" value="RNase_III_sf"/>
</dbReference>
<dbReference type="NCBIfam" id="TIGR02191">
    <property type="entry name" value="RNaseIII"/>
    <property type="match status" value="1"/>
</dbReference>
<dbReference type="PANTHER" id="PTHR11207:SF0">
    <property type="entry name" value="RIBONUCLEASE 3"/>
    <property type="match status" value="1"/>
</dbReference>
<dbReference type="PANTHER" id="PTHR11207">
    <property type="entry name" value="RIBONUCLEASE III"/>
    <property type="match status" value="1"/>
</dbReference>
<dbReference type="Pfam" id="PF00035">
    <property type="entry name" value="dsrm"/>
    <property type="match status" value="1"/>
</dbReference>
<dbReference type="Pfam" id="PF14622">
    <property type="entry name" value="Ribonucleas_3_3"/>
    <property type="match status" value="1"/>
</dbReference>
<dbReference type="SMART" id="SM00358">
    <property type="entry name" value="DSRM"/>
    <property type="match status" value="1"/>
</dbReference>
<dbReference type="SMART" id="SM00535">
    <property type="entry name" value="RIBOc"/>
    <property type="match status" value="1"/>
</dbReference>
<dbReference type="SUPFAM" id="SSF54768">
    <property type="entry name" value="dsRNA-binding domain-like"/>
    <property type="match status" value="1"/>
</dbReference>
<dbReference type="SUPFAM" id="SSF69065">
    <property type="entry name" value="RNase III domain-like"/>
    <property type="match status" value="1"/>
</dbReference>
<dbReference type="PROSITE" id="PS50137">
    <property type="entry name" value="DS_RBD"/>
    <property type="match status" value="1"/>
</dbReference>
<dbReference type="PROSITE" id="PS00517">
    <property type="entry name" value="RNASE_3_1"/>
    <property type="match status" value="1"/>
</dbReference>
<dbReference type="PROSITE" id="PS50142">
    <property type="entry name" value="RNASE_3_2"/>
    <property type="match status" value="1"/>
</dbReference>
<accession>Q28V23</accession>
<feature type="chain" id="PRO_1000075766" description="Ribonuclease 3">
    <location>
        <begin position="1"/>
        <end position="227"/>
    </location>
</feature>
<feature type="domain" description="RNase III" evidence="1">
    <location>
        <begin position="7"/>
        <end position="132"/>
    </location>
</feature>
<feature type="domain" description="DRBM" evidence="1">
    <location>
        <begin position="157"/>
        <end position="226"/>
    </location>
</feature>
<feature type="active site" evidence="1">
    <location>
        <position position="49"/>
    </location>
</feature>
<feature type="active site" evidence="1">
    <location>
        <position position="121"/>
    </location>
</feature>
<feature type="binding site" evidence="1">
    <location>
        <position position="45"/>
    </location>
    <ligand>
        <name>Mg(2+)</name>
        <dbReference type="ChEBI" id="CHEBI:18420"/>
    </ligand>
</feature>
<feature type="binding site" evidence="1">
    <location>
        <position position="118"/>
    </location>
    <ligand>
        <name>Mg(2+)</name>
        <dbReference type="ChEBI" id="CHEBI:18420"/>
    </ligand>
</feature>
<feature type="binding site" evidence="1">
    <location>
        <position position="121"/>
    </location>
    <ligand>
        <name>Mg(2+)</name>
        <dbReference type="ChEBI" id="CHEBI:18420"/>
    </ligand>
</feature>
<comment type="function">
    <text evidence="1">Digests double-stranded RNA. Involved in the processing of primary rRNA transcript to yield the immediate precursors to the large and small rRNAs (23S and 16S). Processes some mRNAs, and tRNAs when they are encoded in the rRNA operon. Processes pre-crRNA and tracrRNA of type II CRISPR loci if present in the organism.</text>
</comment>
<comment type="catalytic activity">
    <reaction evidence="1">
        <text>Endonucleolytic cleavage to 5'-phosphomonoester.</text>
        <dbReference type="EC" id="3.1.26.3"/>
    </reaction>
</comment>
<comment type="cofactor">
    <cofactor evidence="1">
        <name>Mg(2+)</name>
        <dbReference type="ChEBI" id="CHEBI:18420"/>
    </cofactor>
</comment>
<comment type="subunit">
    <text evidence="1">Homodimer.</text>
</comment>
<comment type="subcellular location">
    <subcellularLocation>
        <location evidence="1">Cytoplasm</location>
    </subcellularLocation>
</comment>
<comment type="similarity">
    <text evidence="1">Belongs to the ribonuclease III family.</text>
</comment>
<name>RNC_JANSC</name>
<organism>
    <name type="scientific">Jannaschia sp. (strain CCS1)</name>
    <dbReference type="NCBI Taxonomy" id="290400"/>
    <lineage>
        <taxon>Bacteria</taxon>
        <taxon>Pseudomonadati</taxon>
        <taxon>Pseudomonadota</taxon>
        <taxon>Alphaproteobacteria</taxon>
        <taxon>Rhodobacterales</taxon>
        <taxon>Roseobacteraceae</taxon>
        <taxon>Jannaschia</taxon>
    </lineage>
</organism>
<gene>
    <name evidence="1" type="primary">rnc</name>
    <name type="ordered locus">Jann_0522</name>
</gene>
<protein>
    <recommendedName>
        <fullName evidence="1">Ribonuclease 3</fullName>
        <ecNumber evidence="1">3.1.26.3</ecNumber>
    </recommendedName>
    <alternativeName>
        <fullName evidence="1">Ribonuclease III</fullName>
        <shortName evidence="1">RNase III</shortName>
    </alternativeName>
</protein>